<comment type="function">
    <text evidence="1">NDH-1 shuttles electrons from NADH, via FMN and iron-sulfur (Fe-S) centers, to quinones in the respiratory chain. The immediate electron acceptor for the enzyme in this species is believed to be ubiquinone. Couples the redox reaction to proton translocation (for every two electrons transferred, four hydrogen ions are translocated across the cytoplasmic membrane), and thus conserves the redox energy in a proton gradient.</text>
</comment>
<comment type="catalytic activity">
    <reaction evidence="1">
        <text>a quinone + NADH + 5 H(+)(in) = a quinol + NAD(+) + 4 H(+)(out)</text>
        <dbReference type="Rhea" id="RHEA:57888"/>
        <dbReference type="ChEBI" id="CHEBI:15378"/>
        <dbReference type="ChEBI" id="CHEBI:24646"/>
        <dbReference type="ChEBI" id="CHEBI:57540"/>
        <dbReference type="ChEBI" id="CHEBI:57945"/>
        <dbReference type="ChEBI" id="CHEBI:132124"/>
    </reaction>
</comment>
<comment type="cofactor">
    <cofactor evidence="1">
        <name>[4Fe-4S] cluster</name>
        <dbReference type="ChEBI" id="CHEBI:49883"/>
    </cofactor>
    <text evidence="1">Binds 2 [4Fe-4S] clusters per subunit.</text>
</comment>
<comment type="subunit">
    <text evidence="1">NDH-1 is composed of 14 different subunits. Subunits NuoA, H, J, K, L, M, N constitute the membrane sector of the complex.</text>
</comment>
<comment type="subcellular location">
    <subcellularLocation>
        <location evidence="1">Cell inner membrane</location>
        <topology evidence="1">Peripheral membrane protein</topology>
    </subcellularLocation>
</comment>
<comment type="similarity">
    <text evidence="1">Belongs to the complex I 23 kDa subunit family.</text>
</comment>
<proteinExistence type="inferred from homology"/>
<accession>Q0BK59</accession>
<keyword id="KW-0004">4Fe-4S</keyword>
<keyword id="KW-0997">Cell inner membrane</keyword>
<keyword id="KW-1003">Cell membrane</keyword>
<keyword id="KW-0408">Iron</keyword>
<keyword id="KW-0411">Iron-sulfur</keyword>
<keyword id="KW-0472">Membrane</keyword>
<keyword id="KW-0479">Metal-binding</keyword>
<keyword id="KW-0520">NAD</keyword>
<keyword id="KW-0874">Quinone</keyword>
<keyword id="KW-0677">Repeat</keyword>
<keyword id="KW-1278">Translocase</keyword>
<keyword id="KW-0830">Ubiquinone</keyword>
<gene>
    <name evidence="1" type="primary">nuoI</name>
    <name type="ordered locus">FTH_1758</name>
</gene>
<feature type="chain" id="PRO_0000298495" description="NADH-quinone oxidoreductase subunit I">
    <location>
        <begin position="1"/>
        <end position="162"/>
    </location>
</feature>
<feature type="domain" description="4Fe-4S ferredoxin-type 1" evidence="1">
    <location>
        <begin position="54"/>
        <end position="83"/>
    </location>
</feature>
<feature type="domain" description="4Fe-4S ferredoxin-type 2" evidence="1">
    <location>
        <begin position="93"/>
        <end position="122"/>
    </location>
</feature>
<feature type="binding site" evidence="1">
    <location>
        <position position="63"/>
    </location>
    <ligand>
        <name>[4Fe-4S] cluster</name>
        <dbReference type="ChEBI" id="CHEBI:49883"/>
        <label>1</label>
    </ligand>
</feature>
<feature type="binding site" evidence="1">
    <location>
        <position position="66"/>
    </location>
    <ligand>
        <name>[4Fe-4S] cluster</name>
        <dbReference type="ChEBI" id="CHEBI:49883"/>
        <label>1</label>
    </ligand>
</feature>
<feature type="binding site" evidence="1">
    <location>
        <position position="69"/>
    </location>
    <ligand>
        <name>[4Fe-4S] cluster</name>
        <dbReference type="ChEBI" id="CHEBI:49883"/>
        <label>1</label>
    </ligand>
</feature>
<feature type="binding site" evidence="1">
    <location>
        <position position="73"/>
    </location>
    <ligand>
        <name>[4Fe-4S] cluster</name>
        <dbReference type="ChEBI" id="CHEBI:49883"/>
        <label>2</label>
    </ligand>
</feature>
<feature type="binding site" evidence="1">
    <location>
        <position position="102"/>
    </location>
    <ligand>
        <name>[4Fe-4S] cluster</name>
        <dbReference type="ChEBI" id="CHEBI:49883"/>
        <label>2</label>
    </ligand>
</feature>
<feature type="binding site" evidence="1">
    <location>
        <position position="105"/>
    </location>
    <ligand>
        <name>[4Fe-4S] cluster</name>
        <dbReference type="ChEBI" id="CHEBI:49883"/>
        <label>2</label>
    </ligand>
</feature>
<feature type="binding site" evidence="1">
    <location>
        <position position="108"/>
    </location>
    <ligand>
        <name>[4Fe-4S] cluster</name>
        <dbReference type="ChEBI" id="CHEBI:49883"/>
        <label>2</label>
    </ligand>
</feature>
<feature type="binding site" evidence="1">
    <location>
        <position position="112"/>
    </location>
    <ligand>
        <name>[4Fe-4S] cluster</name>
        <dbReference type="ChEBI" id="CHEBI:49883"/>
        <label>1</label>
    </ligand>
</feature>
<organism>
    <name type="scientific">Francisella tularensis subsp. holarctica (strain OSU18)</name>
    <dbReference type="NCBI Taxonomy" id="393011"/>
    <lineage>
        <taxon>Bacteria</taxon>
        <taxon>Pseudomonadati</taxon>
        <taxon>Pseudomonadota</taxon>
        <taxon>Gammaproteobacteria</taxon>
        <taxon>Thiotrichales</taxon>
        <taxon>Francisellaceae</taxon>
        <taxon>Francisella</taxon>
    </lineage>
</organism>
<sequence>MRNITNFLKTFLLWELLKGLKVTGKHFFTRKVTVQYPDEKTPISNRFRGLHALRRYENGEERCIACKLCEVVCPALAITINSTEREDGTRRTSSYEMDLFKCIFCGYCEESCPVDSIVETNILEYHFEERGENIMTKAKLLAIGDKYEAQIAADRLQDKDFR</sequence>
<reference key="1">
    <citation type="journal article" date="2006" name="J. Bacteriol.">
        <title>Chromosome rearrangement and diversification of Francisella tularensis revealed by the type B (OSU18) genome sequence.</title>
        <authorList>
            <person name="Petrosino J.F."/>
            <person name="Xiang Q."/>
            <person name="Karpathy S.E."/>
            <person name="Jiang H."/>
            <person name="Yerrapragada S."/>
            <person name="Liu Y."/>
            <person name="Gioia J."/>
            <person name="Hemphill L."/>
            <person name="Gonzalez A."/>
            <person name="Raghavan T.M."/>
            <person name="Uzman A."/>
            <person name="Fox G.E."/>
            <person name="Highlander S."/>
            <person name="Reichard M."/>
            <person name="Morton R.J."/>
            <person name="Clinkenbeard K.D."/>
            <person name="Weinstock G.M."/>
        </authorList>
    </citation>
    <scope>NUCLEOTIDE SEQUENCE [LARGE SCALE GENOMIC DNA]</scope>
    <source>
        <strain>OSU18</strain>
    </source>
</reference>
<name>NUOI_FRATO</name>
<dbReference type="EC" id="7.1.1.-" evidence="1"/>
<dbReference type="EMBL" id="CP000437">
    <property type="protein sequence ID" value="ABI83525.1"/>
    <property type="molecule type" value="Genomic_DNA"/>
</dbReference>
<dbReference type="RefSeq" id="WP_003017376.1">
    <property type="nucleotide sequence ID" value="NC_017463.1"/>
</dbReference>
<dbReference type="SMR" id="Q0BK59"/>
<dbReference type="KEGG" id="fth:FTH_1758"/>
<dbReference type="GO" id="GO:0005886">
    <property type="term" value="C:plasma membrane"/>
    <property type="evidence" value="ECO:0007669"/>
    <property type="project" value="UniProtKB-SubCell"/>
</dbReference>
<dbReference type="GO" id="GO:0051539">
    <property type="term" value="F:4 iron, 4 sulfur cluster binding"/>
    <property type="evidence" value="ECO:0007669"/>
    <property type="project" value="UniProtKB-KW"/>
</dbReference>
<dbReference type="GO" id="GO:0005506">
    <property type="term" value="F:iron ion binding"/>
    <property type="evidence" value="ECO:0007669"/>
    <property type="project" value="UniProtKB-UniRule"/>
</dbReference>
<dbReference type="GO" id="GO:0050136">
    <property type="term" value="F:NADH:ubiquinone reductase (non-electrogenic) activity"/>
    <property type="evidence" value="ECO:0007669"/>
    <property type="project" value="UniProtKB-UniRule"/>
</dbReference>
<dbReference type="GO" id="GO:0048038">
    <property type="term" value="F:quinone binding"/>
    <property type="evidence" value="ECO:0007669"/>
    <property type="project" value="UniProtKB-KW"/>
</dbReference>
<dbReference type="GO" id="GO:0009060">
    <property type="term" value="P:aerobic respiration"/>
    <property type="evidence" value="ECO:0007669"/>
    <property type="project" value="TreeGrafter"/>
</dbReference>
<dbReference type="FunFam" id="3.30.70.3270:FF:000003">
    <property type="entry name" value="NADH-quinone oxidoreductase subunit I"/>
    <property type="match status" value="1"/>
</dbReference>
<dbReference type="Gene3D" id="3.30.70.3270">
    <property type="match status" value="1"/>
</dbReference>
<dbReference type="HAMAP" id="MF_01351">
    <property type="entry name" value="NDH1_NuoI"/>
    <property type="match status" value="1"/>
</dbReference>
<dbReference type="InterPro" id="IPR017896">
    <property type="entry name" value="4Fe4S_Fe-S-bd"/>
</dbReference>
<dbReference type="InterPro" id="IPR017900">
    <property type="entry name" value="4Fe4S_Fe_S_CS"/>
</dbReference>
<dbReference type="InterPro" id="IPR010226">
    <property type="entry name" value="NADH_quinone_OxRdtase_chainI"/>
</dbReference>
<dbReference type="NCBIfam" id="TIGR01971">
    <property type="entry name" value="NuoI"/>
    <property type="match status" value="1"/>
</dbReference>
<dbReference type="NCBIfam" id="NF004538">
    <property type="entry name" value="PRK05888.1-4"/>
    <property type="match status" value="1"/>
</dbReference>
<dbReference type="PANTHER" id="PTHR10849:SF20">
    <property type="entry name" value="NADH DEHYDROGENASE [UBIQUINONE] IRON-SULFUR PROTEIN 8, MITOCHONDRIAL"/>
    <property type="match status" value="1"/>
</dbReference>
<dbReference type="PANTHER" id="PTHR10849">
    <property type="entry name" value="NADH DEHYDROGENASE UBIQUINONE IRON-SULFUR PROTEIN 8, MITOCHONDRIAL"/>
    <property type="match status" value="1"/>
</dbReference>
<dbReference type="Pfam" id="PF12838">
    <property type="entry name" value="Fer4_7"/>
    <property type="match status" value="1"/>
</dbReference>
<dbReference type="SUPFAM" id="SSF54862">
    <property type="entry name" value="4Fe-4S ferredoxins"/>
    <property type="match status" value="1"/>
</dbReference>
<dbReference type="PROSITE" id="PS00198">
    <property type="entry name" value="4FE4S_FER_1"/>
    <property type="match status" value="2"/>
</dbReference>
<dbReference type="PROSITE" id="PS51379">
    <property type="entry name" value="4FE4S_FER_2"/>
    <property type="match status" value="2"/>
</dbReference>
<evidence type="ECO:0000255" key="1">
    <source>
        <dbReference type="HAMAP-Rule" id="MF_01351"/>
    </source>
</evidence>
<protein>
    <recommendedName>
        <fullName evidence="1">NADH-quinone oxidoreductase subunit I</fullName>
        <ecNumber evidence="1">7.1.1.-</ecNumber>
    </recommendedName>
    <alternativeName>
        <fullName evidence="1">NADH dehydrogenase I subunit I</fullName>
    </alternativeName>
    <alternativeName>
        <fullName evidence="1">NDH-1 subunit I</fullName>
    </alternativeName>
</protein>